<evidence type="ECO:0000255" key="1">
    <source>
        <dbReference type="HAMAP-Rule" id="MF_00101"/>
    </source>
</evidence>
<accession>B0K5Y6</accession>
<proteinExistence type="inferred from homology"/>
<sequence length="138" mass="15326">MELFVGTDIVEVERIKKAFDANSKFLERLFTQKEIEYFNSKRMKLPHIAGFFSAKESISKVLGTGISGFSWKDIEICHDEKGAPAVILKGKAKNIADKKGIRDIKLSISHTKTYAISCAIAIGGEKNDSADLKTDERS</sequence>
<gene>
    <name evidence="1" type="primary">acpS</name>
    <name type="ordered locus">Teth514_0961</name>
</gene>
<keyword id="KW-0963">Cytoplasm</keyword>
<keyword id="KW-0275">Fatty acid biosynthesis</keyword>
<keyword id="KW-0276">Fatty acid metabolism</keyword>
<keyword id="KW-0444">Lipid biosynthesis</keyword>
<keyword id="KW-0443">Lipid metabolism</keyword>
<keyword id="KW-0460">Magnesium</keyword>
<keyword id="KW-0479">Metal-binding</keyword>
<keyword id="KW-0808">Transferase</keyword>
<dbReference type="EC" id="2.7.8.7" evidence="1"/>
<dbReference type="EMBL" id="CP000923">
    <property type="protein sequence ID" value="ABY92262.1"/>
    <property type="molecule type" value="Genomic_DNA"/>
</dbReference>
<dbReference type="RefSeq" id="WP_003867467.1">
    <property type="nucleotide sequence ID" value="NC_010320.1"/>
</dbReference>
<dbReference type="SMR" id="B0K5Y6"/>
<dbReference type="KEGG" id="tex:Teth514_0961"/>
<dbReference type="HOGENOM" id="CLU_089696_0_2_9"/>
<dbReference type="Proteomes" id="UP000002155">
    <property type="component" value="Chromosome"/>
</dbReference>
<dbReference type="GO" id="GO:0005737">
    <property type="term" value="C:cytoplasm"/>
    <property type="evidence" value="ECO:0007669"/>
    <property type="project" value="UniProtKB-SubCell"/>
</dbReference>
<dbReference type="GO" id="GO:0008897">
    <property type="term" value="F:holo-[acyl-carrier-protein] synthase activity"/>
    <property type="evidence" value="ECO:0007669"/>
    <property type="project" value="UniProtKB-UniRule"/>
</dbReference>
<dbReference type="GO" id="GO:0000287">
    <property type="term" value="F:magnesium ion binding"/>
    <property type="evidence" value="ECO:0007669"/>
    <property type="project" value="UniProtKB-UniRule"/>
</dbReference>
<dbReference type="GO" id="GO:0006633">
    <property type="term" value="P:fatty acid biosynthetic process"/>
    <property type="evidence" value="ECO:0007669"/>
    <property type="project" value="UniProtKB-UniRule"/>
</dbReference>
<dbReference type="Gene3D" id="3.90.470.20">
    <property type="entry name" value="4'-phosphopantetheinyl transferase domain"/>
    <property type="match status" value="1"/>
</dbReference>
<dbReference type="HAMAP" id="MF_00101">
    <property type="entry name" value="AcpS"/>
    <property type="match status" value="1"/>
</dbReference>
<dbReference type="InterPro" id="IPR008278">
    <property type="entry name" value="4-PPantetheinyl_Trfase_dom"/>
</dbReference>
<dbReference type="InterPro" id="IPR037143">
    <property type="entry name" value="4-PPantetheinyl_Trfase_dom_sf"/>
</dbReference>
<dbReference type="InterPro" id="IPR002582">
    <property type="entry name" value="ACPS"/>
</dbReference>
<dbReference type="InterPro" id="IPR004568">
    <property type="entry name" value="Ppantetheine-prot_Trfase_dom"/>
</dbReference>
<dbReference type="NCBIfam" id="TIGR00516">
    <property type="entry name" value="acpS"/>
    <property type="match status" value="1"/>
</dbReference>
<dbReference type="NCBIfam" id="TIGR00556">
    <property type="entry name" value="pantethn_trn"/>
    <property type="match status" value="1"/>
</dbReference>
<dbReference type="Pfam" id="PF01648">
    <property type="entry name" value="ACPS"/>
    <property type="match status" value="1"/>
</dbReference>
<dbReference type="SUPFAM" id="SSF56214">
    <property type="entry name" value="4'-phosphopantetheinyl transferase"/>
    <property type="match status" value="1"/>
</dbReference>
<organism>
    <name type="scientific">Thermoanaerobacter sp. (strain X514)</name>
    <dbReference type="NCBI Taxonomy" id="399726"/>
    <lineage>
        <taxon>Bacteria</taxon>
        <taxon>Bacillati</taxon>
        <taxon>Bacillota</taxon>
        <taxon>Clostridia</taxon>
        <taxon>Thermoanaerobacterales</taxon>
        <taxon>Thermoanaerobacteraceae</taxon>
        <taxon>Thermoanaerobacter</taxon>
    </lineage>
</organism>
<comment type="function">
    <text evidence="1">Transfers the 4'-phosphopantetheine moiety from coenzyme A to a Ser of acyl-carrier-protein.</text>
</comment>
<comment type="catalytic activity">
    <reaction evidence="1">
        <text>apo-[ACP] + CoA = holo-[ACP] + adenosine 3',5'-bisphosphate + H(+)</text>
        <dbReference type="Rhea" id="RHEA:12068"/>
        <dbReference type="Rhea" id="RHEA-COMP:9685"/>
        <dbReference type="Rhea" id="RHEA-COMP:9690"/>
        <dbReference type="ChEBI" id="CHEBI:15378"/>
        <dbReference type="ChEBI" id="CHEBI:29999"/>
        <dbReference type="ChEBI" id="CHEBI:57287"/>
        <dbReference type="ChEBI" id="CHEBI:58343"/>
        <dbReference type="ChEBI" id="CHEBI:64479"/>
        <dbReference type="EC" id="2.7.8.7"/>
    </reaction>
</comment>
<comment type="cofactor">
    <cofactor evidence="1">
        <name>Mg(2+)</name>
        <dbReference type="ChEBI" id="CHEBI:18420"/>
    </cofactor>
</comment>
<comment type="subcellular location">
    <subcellularLocation>
        <location evidence="1">Cytoplasm</location>
    </subcellularLocation>
</comment>
<comment type="similarity">
    <text evidence="1">Belongs to the P-Pant transferase superfamily. AcpS family.</text>
</comment>
<name>ACPS_THEPX</name>
<protein>
    <recommendedName>
        <fullName evidence="1">Holo-[acyl-carrier-protein] synthase</fullName>
        <shortName evidence="1">Holo-ACP synthase</shortName>
        <ecNumber evidence="1">2.7.8.7</ecNumber>
    </recommendedName>
    <alternativeName>
        <fullName evidence="1">4'-phosphopantetheinyl transferase AcpS</fullName>
    </alternativeName>
</protein>
<feature type="chain" id="PRO_1000093925" description="Holo-[acyl-carrier-protein] synthase">
    <location>
        <begin position="1"/>
        <end position="138"/>
    </location>
</feature>
<feature type="binding site" evidence="1">
    <location>
        <position position="8"/>
    </location>
    <ligand>
        <name>Mg(2+)</name>
        <dbReference type="ChEBI" id="CHEBI:18420"/>
    </ligand>
</feature>
<feature type="binding site" evidence="1">
    <location>
        <position position="56"/>
    </location>
    <ligand>
        <name>Mg(2+)</name>
        <dbReference type="ChEBI" id="CHEBI:18420"/>
    </ligand>
</feature>
<reference key="1">
    <citation type="submission" date="2008-01" db="EMBL/GenBank/DDBJ databases">
        <title>Complete sequence of Thermoanaerobacter sp. X514.</title>
        <authorList>
            <consortium name="US DOE Joint Genome Institute"/>
            <person name="Copeland A."/>
            <person name="Lucas S."/>
            <person name="Lapidus A."/>
            <person name="Barry K."/>
            <person name="Glavina del Rio T."/>
            <person name="Dalin E."/>
            <person name="Tice H."/>
            <person name="Pitluck S."/>
            <person name="Bruce D."/>
            <person name="Goodwin L."/>
            <person name="Saunders E."/>
            <person name="Brettin T."/>
            <person name="Detter J.C."/>
            <person name="Han C."/>
            <person name="Schmutz J."/>
            <person name="Larimer F."/>
            <person name="Land M."/>
            <person name="Hauser L."/>
            <person name="Kyrpides N."/>
            <person name="Kim E."/>
            <person name="Hemme C."/>
            <person name="Fields M.W."/>
            <person name="He Z."/>
            <person name="Zhou J."/>
            <person name="Richardson P."/>
        </authorList>
    </citation>
    <scope>NUCLEOTIDE SEQUENCE [LARGE SCALE GENOMIC DNA]</scope>
    <source>
        <strain>X514</strain>
    </source>
</reference>